<name>GLGC_GLOC7</name>
<comment type="function">
    <text evidence="1">Involved in the biosynthesis of ADP-glucose, a building block required for the elongation reactions to produce glycogen. Catalyzes the reaction between ATP and alpha-D-glucose 1-phosphate (G1P) to produce pyrophosphate and ADP-Glc.</text>
</comment>
<comment type="catalytic activity">
    <reaction evidence="1">
        <text>alpha-D-glucose 1-phosphate + ATP + H(+) = ADP-alpha-D-glucose + diphosphate</text>
        <dbReference type="Rhea" id="RHEA:12120"/>
        <dbReference type="ChEBI" id="CHEBI:15378"/>
        <dbReference type="ChEBI" id="CHEBI:30616"/>
        <dbReference type="ChEBI" id="CHEBI:33019"/>
        <dbReference type="ChEBI" id="CHEBI:57498"/>
        <dbReference type="ChEBI" id="CHEBI:58601"/>
        <dbReference type="EC" id="2.7.7.27"/>
    </reaction>
</comment>
<comment type="pathway">
    <text evidence="1">Glycan biosynthesis; glycogen biosynthesis.</text>
</comment>
<comment type="subunit">
    <text evidence="1">Homotetramer.</text>
</comment>
<comment type="similarity">
    <text evidence="1">Belongs to the bacterial/plant glucose-1-phosphate adenylyltransferase family.</text>
</comment>
<evidence type="ECO:0000255" key="1">
    <source>
        <dbReference type="HAMAP-Rule" id="MF_00624"/>
    </source>
</evidence>
<accession>B7KDB8</accession>
<reference key="1">
    <citation type="journal article" date="2011" name="MBio">
        <title>Novel metabolic attributes of the genus Cyanothece, comprising a group of unicellular nitrogen-fixing Cyanobacteria.</title>
        <authorList>
            <person name="Bandyopadhyay A."/>
            <person name="Elvitigala T."/>
            <person name="Welsh E."/>
            <person name="Stockel J."/>
            <person name="Liberton M."/>
            <person name="Min H."/>
            <person name="Sherman L.A."/>
            <person name="Pakrasi H.B."/>
        </authorList>
    </citation>
    <scope>NUCLEOTIDE SEQUENCE [LARGE SCALE GENOMIC DNA]</scope>
    <source>
        <strain>PCC 7424</strain>
    </source>
</reference>
<sequence length="429" mass="48573">MKRVLAIILGGGAGTRLYPLTKLRAKPAVPLAGKYRLIDIPVSNCINSEITKIYVLTQFNSASLNRHLSRTYNFTGFNDEFVEVLAAQQTAENPSWFQGTADAVRQYLWLMEEWDVDEYLILSGDHLYRMDYREYIQRHRETKADITLSVVPIDEKRASSFGLMKIDDNARVVDFSEKPKGEALRQMQVDTSILGLSPDQARKNPYIASMGIYIFNREVLGKLLRQNPEQTDFGKEIIPGAKTDYNLQAYLYKGYWEDIGTIEAFYESNLALTQQPQPPFSFYDEKAPIYTRPRYLPPTKVLNCTITESMISEGCILKDCRIHHSVLGIRSRVESDCTIEDSMLMGADYYESSTKRKAVLEAGKVPQGIGAGTTIRRAIIDKNARIGRNVLIINKDRIEEAEREDEGFLIRSGIVVVIKNATIPDGTVI</sequence>
<keyword id="KW-0067">ATP-binding</keyword>
<keyword id="KW-0119">Carbohydrate metabolism</keyword>
<keyword id="KW-0320">Glycogen biosynthesis</keyword>
<keyword id="KW-0321">Glycogen metabolism</keyword>
<keyword id="KW-0547">Nucleotide-binding</keyword>
<keyword id="KW-0548">Nucleotidyltransferase</keyword>
<keyword id="KW-1185">Reference proteome</keyword>
<keyword id="KW-0808">Transferase</keyword>
<dbReference type="EC" id="2.7.7.27" evidence="1"/>
<dbReference type="EMBL" id="CP001291">
    <property type="protein sequence ID" value="ACK68938.1"/>
    <property type="molecule type" value="Genomic_DNA"/>
</dbReference>
<dbReference type="RefSeq" id="WP_012597885.1">
    <property type="nucleotide sequence ID" value="NC_011729.1"/>
</dbReference>
<dbReference type="SMR" id="B7KDB8"/>
<dbReference type="STRING" id="65393.PCC7424_0473"/>
<dbReference type="KEGG" id="cyc:PCC7424_0473"/>
<dbReference type="eggNOG" id="COG0448">
    <property type="taxonomic scope" value="Bacteria"/>
</dbReference>
<dbReference type="HOGENOM" id="CLU_029499_14_4_3"/>
<dbReference type="OrthoDB" id="9801810at2"/>
<dbReference type="UniPathway" id="UPA00164"/>
<dbReference type="Proteomes" id="UP000002384">
    <property type="component" value="Chromosome"/>
</dbReference>
<dbReference type="GO" id="GO:0031470">
    <property type="term" value="C:carboxysome"/>
    <property type="evidence" value="ECO:0007669"/>
    <property type="project" value="UniProtKB-ARBA"/>
</dbReference>
<dbReference type="GO" id="GO:0005524">
    <property type="term" value="F:ATP binding"/>
    <property type="evidence" value="ECO:0007669"/>
    <property type="project" value="UniProtKB-KW"/>
</dbReference>
<dbReference type="GO" id="GO:0008878">
    <property type="term" value="F:glucose-1-phosphate adenylyltransferase activity"/>
    <property type="evidence" value="ECO:0007669"/>
    <property type="project" value="UniProtKB-UniRule"/>
</dbReference>
<dbReference type="GO" id="GO:0043886">
    <property type="term" value="F:structural constituent of carboxysome shell"/>
    <property type="evidence" value="ECO:0007669"/>
    <property type="project" value="UniProtKB-ARBA"/>
</dbReference>
<dbReference type="GO" id="GO:0005978">
    <property type="term" value="P:glycogen biosynthetic process"/>
    <property type="evidence" value="ECO:0007669"/>
    <property type="project" value="UniProtKB-UniRule"/>
</dbReference>
<dbReference type="CDD" id="cd02508">
    <property type="entry name" value="ADP_Glucose_PP"/>
    <property type="match status" value="1"/>
</dbReference>
<dbReference type="CDD" id="cd04651">
    <property type="entry name" value="LbH_G1P_AT_C"/>
    <property type="match status" value="1"/>
</dbReference>
<dbReference type="Gene3D" id="2.160.10.10">
    <property type="entry name" value="Hexapeptide repeat proteins"/>
    <property type="match status" value="1"/>
</dbReference>
<dbReference type="Gene3D" id="3.90.550.10">
    <property type="entry name" value="Spore Coat Polysaccharide Biosynthesis Protein SpsA, Chain A"/>
    <property type="match status" value="1"/>
</dbReference>
<dbReference type="HAMAP" id="MF_00624">
    <property type="entry name" value="GlgC"/>
    <property type="match status" value="1"/>
</dbReference>
<dbReference type="InterPro" id="IPR011831">
    <property type="entry name" value="ADP-Glc_PPase"/>
</dbReference>
<dbReference type="InterPro" id="IPR005836">
    <property type="entry name" value="ADP_Glu_pyroP_CS"/>
</dbReference>
<dbReference type="InterPro" id="IPR023049">
    <property type="entry name" value="GlgC_bac"/>
</dbReference>
<dbReference type="InterPro" id="IPR005835">
    <property type="entry name" value="NTP_transferase_dom"/>
</dbReference>
<dbReference type="InterPro" id="IPR029044">
    <property type="entry name" value="Nucleotide-diphossugar_trans"/>
</dbReference>
<dbReference type="InterPro" id="IPR011004">
    <property type="entry name" value="Trimer_LpxA-like_sf"/>
</dbReference>
<dbReference type="NCBIfam" id="TIGR02091">
    <property type="entry name" value="glgC"/>
    <property type="match status" value="1"/>
</dbReference>
<dbReference type="NCBIfam" id="NF002772">
    <property type="entry name" value="PRK02862.1"/>
    <property type="match status" value="1"/>
</dbReference>
<dbReference type="PANTHER" id="PTHR43523:SF12">
    <property type="entry name" value="GLUCOSE-1-PHOSPHATE ADENYLYLTRANSFERASE LARGE SUBUNIT 1, CHLOROPLASTIC-RELATED"/>
    <property type="match status" value="1"/>
</dbReference>
<dbReference type="PANTHER" id="PTHR43523">
    <property type="entry name" value="GLUCOSE-1-PHOSPHATE ADENYLYLTRANSFERASE-RELATED"/>
    <property type="match status" value="1"/>
</dbReference>
<dbReference type="Pfam" id="PF25247">
    <property type="entry name" value="LbH_GLGC"/>
    <property type="match status" value="1"/>
</dbReference>
<dbReference type="Pfam" id="PF00483">
    <property type="entry name" value="NTP_transferase"/>
    <property type="match status" value="1"/>
</dbReference>
<dbReference type="SUPFAM" id="SSF53448">
    <property type="entry name" value="Nucleotide-diphospho-sugar transferases"/>
    <property type="match status" value="1"/>
</dbReference>
<dbReference type="SUPFAM" id="SSF51161">
    <property type="entry name" value="Trimeric LpxA-like enzymes"/>
    <property type="match status" value="1"/>
</dbReference>
<dbReference type="PROSITE" id="PS00808">
    <property type="entry name" value="ADP_GLC_PYROPHOSPH_1"/>
    <property type="match status" value="1"/>
</dbReference>
<dbReference type="PROSITE" id="PS00809">
    <property type="entry name" value="ADP_GLC_PYROPHOSPH_2"/>
    <property type="match status" value="1"/>
</dbReference>
<dbReference type="PROSITE" id="PS00810">
    <property type="entry name" value="ADP_GLC_PYROPHOSPH_3"/>
    <property type="match status" value="1"/>
</dbReference>
<organism>
    <name type="scientific">Gloeothece citriformis (strain PCC 7424)</name>
    <name type="common">Cyanothece sp. (strain PCC 7424)</name>
    <dbReference type="NCBI Taxonomy" id="65393"/>
    <lineage>
        <taxon>Bacteria</taxon>
        <taxon>Bacillati</taxon>
        <taxon>Cyanobacteriota</taxon>
        <taxon>Cyanophyceae</taxon>
        <taxon>Oscillatoriophycideae</taxon>
        <taxon>Chroococcales</taxon>
        <taxon>Aphanothecaceae</taxon>
        <taxon>Gloeothece</taxon>
        <taxon>Gloeothece citriformis</taxon>
    </lineage>
</organism>
<protein>
    <recommendedName>
        <fullName evidence="1">Glucose-1-phosphate adenylyltransferase</fullName>
        <ecNumber evidence="1">2.7.7.27</ecNumber>
    </recommendedName>
    <alternativeName>
        <fullName evidence="1">ADP-glucose pyrophosphorylase</fullName>
        <shortName evidence="1">ADPGlc PPase</shortName>
    </alternativeName>
    <alternativeName>
        <fullName evidence="1">ADP-glucose synthase</fullName>
    </alternativeName>
</protein>
<feature type="chain" id="PRO_1000130472" description="Glucose-1-phosphate adenylyltransferase">
    <location>
        <begin position="1"/>
        <end position="429"/>
    </location>
</feature>
<feature type="binding site" evidence="1">
    <location>
        <position position="162"/>
    </location>
    <ligand>
        <name>alpha-D-glucose 1-phosphate</name>
        <dbReference type="ChEBI" id="CHEBI:58601"/>
    </ligand>
</feature>
<feature type="binding site" evidence="1">
    <location>
        <begin position="177"/>
        <end position="178"/>
    </location>
    <ligand>
        <name>alpha-D-glucose 1-phosphate</name>
        <dbReference type="ChEBI" id="CHEBI:58601"/>
    </ligand>
</feature>
<feature type="binding site" evidence="1">
    <location>
        <position position="209"/>
    </location>
    <ligand>
        <name>alpha-D-glucose 1-phosphate</name>
        <dbReference type="ChEBI" id="CHEBI:58601"/>
    </ligand>
</feature>
<gene>
    <name evidence="1" type="primary">glgC</name>
    <name type="ordered locus">PCC7424_0473</name>
</gene>
<proteinExistence type="inferred from homology"/>